<name>HEM1_SALEP</name>
<keyword id="KW-0521">NADP</keyword>
<keyword id="KW-0560">Oxidoreductase</keyword>
<keyword id="KW-0627">Porphyrin biosynthesis</keyword>
<sequence length="418" mass="46105">MTLLALGINHKTAPVSLRERVTFSPDTLDQALDSLLAQPMVQGGVVLSTCNRTELYLSVEEQDNLQEALIRWLCDYHNLNEDDLRNSLYWHQDNDAVSHLMRVASGLDSLVLGEPQILGQVKKAFADSQKGHLNASALERMFQKSFSVAKRVRTETDIGASAVSVAFAACTLARQIFESLSTVTVLLVGAGETIELVARHLREHKVQKMIIANRTRERAQALADEVGAEVISLSDIDARLQDADIIISSTASPLPIIGKGMVERALKSRRNQPMLLVDIAVPRDVEPEVGKLANAYLYSVDDLQSIISHNLAQRQAAAVEAETIVEQEASEFMAWLRAQGASETIREYRSQSEQIRDELTTKALSALQQGGDAQAILQDLAWKLTNRLIHAPTKSLQQAARDGDDERLNILRDSLGLE</sequence>
<protein>
    <recommendedName>
        <fullName evidence="1">Glutamyl-tRNA reductase</fullName>
        <shortName evidence="1">GluTR</shortName>
        <ecNumber evidence="1">1.2.1.70</ecNumber>
    </recommendedName>
</protein>
<dbReference type="EC" id="1.2.1.70" evidence="1"/>
<dbReference type="EMBL" id="AM933172">
    <property type="protein sequence ID" value="CAR32840.1"/>
    <property type="molecule type" value="Genomic_DNA"/>
</dbReference>
<dbReference type="RefSeq" id="WP_000173208.1">
    <property type="nucleotide sequence ID" value="NC_011294.1"/>
</dbReference>
<dbReference type="SMR" id="B5R3J8"/>
<dbReference type="KEGG" id="set:SEN1262"/>
<dbReference type="HOGENOM" id="CLU_035113_2_2_6"/>
<dbReference type="UniPathway" id="UPA00251">
    <property type="reaction ID" value="UER00316"/>
</dbReference>
<dbReference type="Proteomes" id="UP000000613">
    <property type="component" value="Chromosome"/>
</dbReference>
<dbReference type="GO" id="GO:0008883">
    <property type="term" value="F:glutamyl-tRNA reductase activity"/>
    <property type="evidence" value="ECO:0007669"/>
    <property type="project" value="UniProtKB-UniRule"/>
</dbReference>
<dbReference type="GO" id="GO:0050661">
    <property type="term" value="F:NADP binding"/>
    <property type="evidence" value="ECO:0007669"/>
    <property type="project" value="InterPro"/>
</dbReference>
<dbReference type="GO" id="GO:0019353">
    <property type="term" value="P:protoporphyrinogen IX biosynthetic process from glutamate"/>
    <property type="evidence" value="ECO:0007669"/>
    <property type="project" value="TreeGrafter"/>
</dbReference>
<dbReference type="CDD" id="cd05213">
    <property type="entry name" value="NAD_bind_Glutamyl_tRNA_reduct"/>
    <property type="match status" value="1"/>
</dbReference>
<dbReference type="FunFam" id="3.30.460.30:FF:000001">
    <property type="entry name" value="Glutamyl-tRNA reductase"/>
    <property type="match status" value="1"/>
</dbReference>
<dbReference type="FunFam" id="3.40.50.720:FF:000031">
    <property type="entry name" value="Glutamyl-tRNA reductase"/>
    <property type="match status" value="1"/>
</dbReference>
<dbReference type="Gene3D" id="3.30.460.30">
    <property type="entry name" value="Glutamyl-tRNA reductase, N-terminal domain"/>
    <property type="match status" value="1"/>
</dbReference>
<dbReference type="Gene3D" id="3.40.50.720">
    <property type="entry name" value="NAD(P)-binding Rossmann-like Domain"/>
    <property type="match status" value="1"/>
</dbReference>
<dbReference type="HAMAP" id="MF_00087">
    <property type="entry name" value="Glu_tRNA_reductase"/>
    <property type="match status" value="1"/>
</dbReference>
<dbReference type="InterPro" id="IPR000343">
    <property type="entry name" value="4pyrrol_synth_GluRdtase"/>
</dbReference>
<dbReference type="InterPro" id="IPR015896">
    <property type="entry name" value="4pyrrol_synth_GluRdtase_dimer"/>
</dbReference>
<dbReference type="InterPro" id="IPR015895">
    <property type="entry name" value="4pyrrol_synth_GluRdtase_N"/>
</dbReference>
<dbReference type="InterPro" id="IPR018214">
    <property type="entry name" value="GluRdtase_CS"/>
</dbReference>
<dbReference type="InterPro" id="IPR036453">
    <property type="entry name" value="GluRdtase_dimer_dom_sf"/>
</dbReference>
<dbReference type="InterPro" id="IPR036343">
    <property type="entry name" value="GluRdtase_N_sf"/>
</dbReference>
<dbReference type="InterPro" id="IPR036291">
    <property type="entry name" value="NAD(P)-bd_dom_sf"/>
</dbReference>
<dbReference type="InterPro" id="IPR006151">
    <property type="entry name" value="Shikm_DH/Glu-tRNA_Rdtase"/>
</dbReference>
<dbReference type="NCBIfam" id="TIGR01035">
    <property type="entry name" value="hemA"/>
    <property type="match status" value="1"/>
</dbReference>
<dbReference type="PANTHER" id="PTHR43013">
    <property type="entry name" value="GLUTAMYL-TRNA REDUCTASE"/>
    <property type="match status" value="1"/>
</dbReference>
<dbReference type="PANTHER" id="PTHR43013:SF1">
    <property type="entry name" value="GLUTAMYL-TRNA REDUCTASE"/>
    <property type="match status" value="1"/>
</dbReference>
<dbReference type="Pfam" id="PF00745">
    <property type="entry name" value="GlutR_dimer"/>
    <property type="match status" value="1"/>
</dbReference>
<dbReference type="Pfam" id="PF05201">
    <property type="entry name" value="GlutR_N"/>
    <property type="match status" value="1"/>
</dbReference>
<dbReference type="Pfam" id="PF01488">
    <property type="entry name" value="Shikimate_DH"/>
    <property type="match status" value="1"/>
</dbReference>
<dbReference type="PIRSF" id="PIRSF000445">
    <property type="entry name" value="4pyrrol_synth_GluRdtase"/>
    <property type="match status" value="1"/>
</dbReference>
<dbReference type="SUPFAM" id="SSF69742">
    <property type="entry name" value="Glutamyl tRNA-reductase catalytic, N-terminal domain"/>
    <property type="match status" value="1"/>
</dbReference>
<dbReference type="SUPFAM" id="SSF69075">
    <property type="entry name" value="Glutamyl tRNA-reductase dimerization domain"/>
    <property type="match status" value="1"/>
</dbReference>
<dbReference type="SUPFAM" id="SSF51735">
    <property type="entry name" value="NAD(P)-binding Rossmann-fold domains"/>
    <property type="match status" value="1"/>
</dbReference>
<dbReference type="PROSITE" id="PS00747">
    <property type="entry name" value="GLUTR"/>
    <property type="match status" value="1"/>
</dbReference>
<reference key="1">
    <citation type="journal article" date="2008" name="Genome Res.">
        <title>Comparative genome analysis of Salmonella enteritidis PT4 and Salmonella gallinarum 287/91 provides insights into evolutionary and host adaptation pathways.</title>
        <authorList>
            <person name="Thomson N.R."/>
            <person name="Clayton D.J."/>
            <person name="Windhorst D."/>
            <person name="Vernikos G."/>
            <person name="Davidson S."/>
            <person name="Churcher C."/>
            <person name="Quail M.A."/>
            <person name="Stevens M."/>
            <person name="Jones M.A."/>
            <person name="Watson M."/>
            <person name="Barron A."/>
            <person name="Layton A."/>
            <person name="Pickard D."/>
            <person name="Kingsley R.A."/>
            <person name="Bignell A."/>
            <person name="Clark L."/>
            <person name="Harris B."/>
            <person name="Ormond D."/>
            <person name="Abdellah Z."/>
            <person name="Brooks K."/>
            <person name="Cherevach I."/>
            <person name="Chillingworth T."/>
            <person name="Woodward J."/>
            <person name="Norberczak H."/>
            <person name="Lord A."/>
            <person name="Arrowsmith C."/>
            <person name="Jagels K."/>
            <person name="Moule S."/>
            <person name="Mungall K."/>
            <person name="Saunders M."/>
            <person name="Whitehead S."/>
            <person name="Chabalgoity J.A."/>
            <person name="Maskell D."/>
            <person name="Humphreys T."/>
            <person name="Roberts M."/>
            <person name="Barrow P.A."/>
            <person name="Dougan G."/>
            <person name="Parkhill J."/>
        </authorList>
    </citation>
    <scope>NUCLEOTIDE SEQUENCE [LARGE SCALE GENOMIC DNA]</scope>
    <source>
        <strain>P125109</strain>
    </source>
</reference>
<feature type="chain" id="PRO_1000093163" description="Glutamyl-tRNA reductase">
    <location>
        <begin position="1"/>
        <end position="418"/>
    </location>
</feature>
<feature type="active site" description="Nucleophile" evidence="1">
    <location>
        <position position="50"/>
    </location>
</feature>
<feature type="binding site" evidence="1">
    <location>
        <begin position="49"/>
        <end position="52"/>
    </location>
    <ligand>
        <name>substrate</name>
    </ligand>
</feature>
<feature type="binding site" evidence="1">
    <location>
        <position position="109"/>
    </location>
    <ligand>
        <name>substrate</name>
    </ligand>
</feature>
<feature type="binding site" evidence="1">
    <location>
        <begin position="114"/>
        <end position="116"/>
    </location>
    <ligand>
        <name>substrate</name>
    </ligand>
</feature>
<feature type="binding site" evidence="1">
    <location>
        <position position="120"/>
    </location>
    <ligand>
        <name>substrate</name>
    </ligand>
</feature>
<feature type="binding site" evidence="1">
    <location>
        <begin position="189"/>
        <end position="194"/>
    </location>
    <ligand>
        <name>NADP(+)</name>
        <dbReference type="ChEBI" id="CHEBI:58349"/>
    </ligand>
</feature>
<feature type="site" description="Important for activity" evidence="1">
    <location>
        <position position="99"/>
    </location>
</feature>
<evidence type="ECO:0000255" key="1">
    <source>
        <dbReference type="HAMAP-Rule" id="MF_00087"/>
    </source>
</evidence>
<proteinExistence type="inferred from homology"/>
<organism>
    <name type="scientific">Salmonella enteritidis PT4 (strain P125109)</name>
    <dbReference type="NCBI Taxonomy" id="550537"/>
    <lineage>
        <taxon>Bacteria</taxon>
        <taxon>Pseudomonadati</taxon>
        <taxon>Pseudomonadota</taxon>
        <taxon>Gammaproteobacteria</taxon>
        <taxon>Enterobacterales</taxon>
        <taxon>Enterobacteriaceae</taxon>
        <taxon>Salmonella</taxon>
    </lineage>
</organism>
<comment type="function">
    <text evidence="1">Catalyzes the NADPH-dependent reduction of glutamyl-tRNA(Glu) to glutamate 1-semialdehyde (GSA).</text>
</comment>
<comment type="catalytic activity">
    <reaction evidence="1">
        <text>(S)-4-amino-5-oxopentanoate + tRNA(Glu) + NADP(+) = L-glutamyl-tRNA(Glu) + NADPH + H(+)</text>
        <dbReference type="Rhea" id="RHEA:12344"/>
        <dbReference type="Rhea" id="RHEA-COMP:9663"/>
        <dbReference type="Rhea" id="RHEA-COMP:9680"/>
        <dbReference type="ChEBI" id="CHEBI:15378"/>
        <dbReference type="ChEBI" id="CHEBI:57501"/>
        <dbReference type="ChEBI" id="CHEBI:57783"/>
        <dbReference type="ChEBI" id="CHEBI:58349"/>
        <dbReference type="ChEBI" id="CHEBI:78442"/>
        <dbReference type="ChEBI" id="CHEBI:78520"/>
        <dbReference type="EC" id="1.2.1.70"/>
    </reaction>
</comment>
<comment type="pathway">
    <text evidence="1">Porphyrin-containing compound metabolism; protoporphyrin-IX biosynthesis; 5-aminolevulinate from L-glutamyl-tRNA(Glu): step 1/2.</text>
</comment>
<comment type="subunit">
    <text evidence="1">Homodimer.</text>
</comment>
<comment type="domain">
    <text evidence="1">Possesses an unusual extended V-shaped dimeric structure with each monomer consisting of three distinct domains arranged along a curved 'spinal' alpha-helix. The N-terminal catalytic domain specifically recognizes the glutamate moiety of the substrate. The second domain is the NADPH-binding domain, and the third C-terminal domain is responsible for dimerization.</text>
</comment>
<comment type="miscellaneous">
    <text evidence="1">During catalysis, the active site Cys acts as a nucleophile attacking the alpha-carbonyl group of tRNA-bound glutamate with the formation of a thioester intermediate between enzyme and glutamate, and the concomitant release of tRNA(Glu). The thioester intermediate is finally reduced by direct hydride transfer from NADPH, to form the product GSA.</text>
</comment>
<comment type="similarity">
    <text evidence="1">Belongs to the glutamyl-tRNA reductase family.</text>
</comment>
<accession>B5R3J8</accession>
<gene>
    <name evidence="1" type="primary">hemA</name>
    <name type="ordered locus">SEN1262</name>
</gene>